<dbReference type="EMBL" id="AE017345">
    <property type="protein sequence ID" value="AAW43782.1"/>
    <property type="molecule type" value="Genomic_DNA"/>
</dbReference>
<dbReference type="RefSeq" id="XP_571089.1">
    <property type="nucleotide sequence ID" value="XM_571089.1"/>
</dbReference>
<dbReference type="SMR" id="P0CR44"/>
<dbReference type="STRING" id="214684.P0CR44"/>
<dbReference type="PaxDb" id="214684-P0CR44"/>
<dbReference type="EnsemblFungi" id="AAW43782">
    <property type="protein sequence ID" value="AAW43782"/>
    <property type="gene ID" value="CNE04320"/>
</dbReference>
<dbReference type="GeneID" id="3257584"/>
<dbReference type="KEGG" id="cne:CNE04320"/>
<dbReference type="VEuPathDB" id="FungiDB:CNE04320"/>
<dbReference type="eggNOG" id="KOG1471">
    <property type="taxonomic scope" value="Eukaryota"/>
</dbReference>
<dbReference type="HOGENOM" id="CLU_045138_0_1_1"/>
<dbReference type="InParanoid" id="P0CR44"/>
<dbReference type="OMA" id="MVQIHDY"/>
<dbReference type="OrthoDB" id="75724at2759"/>
<dbReference type="Proteomes" id="UP000002149">
    <property type="component" value="Chromosome 5"/>
</dbReference>
<dbReference type="GO" id="GO:0032541">
    <property type="term" value="C:cortical endoplasmic reticulum"/>
    <property type="evidence" value="ECO:0000318"/>
    <property type="project" value="GO_Central"/>
</dbReference>
<dbReference type="GO" id="GO:0005829">
    <property type="term" value="C:cytosol"/>
    <property type="evidence" value="ECO:0000318"/>
    <property type="project" value="GO_Central"/>
</dbReference>
<dbReference type="GO" id="GO:0005789">
    <property type="term" value="C:endoplasmic reticulum membrane"/>
    <property type="evidence" value="ECO:0007669"/>
    <property type="project" value="UniProtKB-SubCell"/>
</dbReference>
<dbReference type="GO" id="GO:0005886">
    <property type="term" value="C:plasma membrane"/>
    <property type="evidence" value="ECO:0000318"/>
    <property type="project" value="GO_Central"/>
</dbReference>
<dbReference type="GO" id="GO:0046872">
    <property type="term" value="F:metal ion binding"/>
    <property type="evidence" value="ECO:0007669"/>
    <property type="project" value="UniProtKB-KW"/>
</dbReference>
<dbReference type="GO" id="GO:0008526">
    <property type="term" value="F:phosphatidylinositol transfer activity"/>
    <property type="evidence" value="ECO:0000318"/>
    <property type="project" value="GO_Central"/>
</dbReference>
<dbReference type="GO" id="GO:0043001">
    <property type="term" value="P:Golgi to plasma membrane protein transport"/>
    <property type="evidence" value="ECO:0000318"/>
    <property type="project" value="GO_Central"/>
</dbReference>
<dbReference type="GO" id="GO:0017157">
    <property type="term" value="P:regulation of exocytosis"/>
    <property type="evidence" value="ECO:0000318"/>
    <property type="project" value="GO_Central"/>
</dbReference>
<dbReference type="CDD" id="cd00170">
    <property type="entry name" value="SEC14"/>
    <property type="match status" value="1"/>
</dbReference>
<dbReference type="FunFam" id="3.40.525.10:FF:000018">
    <property type="entry name" value="Phosphatidylinositol transfer protein SFH5"/>
    <property type="match status" value="1"/>
</dbReference>
<dbReference type="Gene3D" id="3.40.525.10">
    <property type="entry name" value="CRAL-TRIO lipid binding domain"/>
    <property type="match status" value="1"/>
</dbReference>
<dbReference type="InterPro" id="IPR001251">
    <property type="entry name" value="CRAL-TRIO_dom"/>
</dbReference>
<dbReference type="InterPro" id="IPR036865">
    <property type="entry name" value="CRAL-TRIO_dom_sf"/>
</dbReference>
<dbReference type="InterPro" id="IPR036273">
    <property type="entry name" value="CRAL/TRIO_N_dom_sf"/>
</dbReference>
<dbReference type="InterPro" id="IPR042938">
    <property type="entry name" value="Sfh5"/>
</dbReference>
<dbReference type="PANTHER" id="PTHR47669">
    <property type="entry name" value="PHOSPHATIDYLINOSITOL TRANSFER PROTEIN SFH5"/>
    <property type="match status" value="1"/>
</dbReference>
<dbReference type="PANTHER" id="PTHR47669:SF1">
    <property type="entry name" value="PHOSPHATIDYLINOSITOL TRANSFER PROTEIN SFH5"/>
    <property type="match status" value="1"/>
</dbReference>
<dbReference type="Pfam" id="PF00650">
    <property type="entry name" value="CRAL_TRIO"/>
    <property type="match status" value="1"/>
</dbReference>
<dbReference type="SUPFAM" id="SSF52087">
    <property type="entry name" value="CRAL/TRIO domain"/>
    <property type="match status" value="1"/>
</dbReference>
<dbReference type="SUPFAM" id="SSF46938">
    <property type="entry name" value="CRAL/TRIO N-terminal domain"/>
    <property type="match status" value="1"/>
</dbReference>
<dbReference type="PROSITE" id="PS50191">
    <property type="entry name" value="CRAL_TRIO"/>
    <property type="match status" value="1"/>
</dbReference>
<organism>
    <name type="scientific">Cryptococcus neoformans var. neoformans serotype D (strain JEC21 / ATCC MYA-565)</name>
    <name type="common">Filobasidiella neoformans</name>
    <dbReference type="NCBI Taxonomy" id="214684"/>
    <lineage>
        <taxon>Eukaryota</taxon>
        <taxon>Fungi</taxon>
        <taxon>Dikarya</taxon>
        <taxon>Basidiomycota</taxon>
        <taxon>Agaricomycotina</taxon>
        <taxon>Tremellomycetes</taxon>
        <taxon>Tremellales</taxon>
        <taxon>Cryptococcaceae</taxon>
        <taxon>Cryptococcus</taxon>
        <taxon>Cryptococcus neoformans species complex</taxon>
    </lineage>
</organism>
<sequence>MSAVEAPSASQAIWPELTEDHPLSQLNSRLPTILSEAGHSQIWGVTLTYSTPPTFSSLIILQKFLRSVDNNVDEAATALGKTLKWRKDWGLDARADKKEKENFGPDFEGLGYVTKIKKNDGGDEIVTWNVYGAVKDLKSTFGDLDRFLRWRVNLMEEAIAHLHLATTSTPIPDFNAGIDPHRMAQVHLYEGVSFLRMDPHVKAASKATIELMAANYPELLSRKFFVGVPLIMSWMFQAVRMFVSAETAKKFVVISYKENLANELGELEGVPKEYGGKGLSLGELQNQLRGEDAVTSS</sequence>
<keyword id="KW-0963">Cytoplasm</keyword>
<keyword id="KW-0256">Endoplasmic reticulum</keyword>
<keyword id="KW-0349">Heme</keyword>
<keyword id="KW-0408">Iron</keyword>
<keyword id="KW-0445">Lipid transport</keyword>
<keyword id="KW-0472">Membrane</keyword>
<keyword id="KW-0479">Metal-binding</keyword>
<keyword id="KW-0492">Microsome</keyword>
<keyword id="KW-1185">Reference proteome</keyword>
<keyword id="KW-0813">Transport</keyword>
<protein>
    <recommendedName>
        <fullName>Phosphatidylinositol transfer protein SFH5</fullName>
        <shortName>PITP SFH5</shortName>
    </recommendedName>
</protein>
<proteinExistence type="inferred from homology"/>
<comment type="function">
    <text evidence="2">Non-classical phosphatidylinositol (PtdIns) transfer protein (PITP), which exhibits PtdIns-binding/transfer activity in the absence of detectable PtdCho-binding/transfer activity. Regulates PtdIns(4,5)P2 homeostasis at the plasma membrane. Heme-binding protein that may play a role in organic oxidant-induced stress responses.</text>
</comment>
<comment type="catalytic activity">
    <reaction evidence="2">
        <text>a 1,2-diacyl-sn-glycero-3-phospho-(1D-myo-inositol)(in) = a 1,2-diacyl-sn-glycero-3-phospho-(1D-myo-inositol)(out)</text>
        <dbReference type="Rhea" id="RHEA:38691"/>
        <dbReference type="ChEBI" id="CHEBI:57880"/>
    </reaction>
    <physiologicalReaction direction="left-to-right" evidence="2">
        <dbReference type="Rhea" id="RHEA:38692"/>
    </physiologicalReaction>
</comment>
<comment type="cofactor">
    <cofactor evidence="1">
        <name>heme b</name>
        <dbReference type="ChEBI" id="CHEBI:60344"/>
    </cofactor>
</comment>
<comment type="subcellular location">
    <subcellularLocation>
        <location evidence="2">Cytoplasm</location>
    </subcellularLocation>
    <subcellularLocation>
        <location evidence="2">Endoplasmic reticulum membrane</location>
        <topology evidence="2">Peripheral membrane protein</topology>
    </subcellularLocation>
    <subcellularLocation>
        <location evidence="2">Microsome membrane</location>
        <topology evidence="2">Peripheral membrane protein</topology>
    </subcellularLocation>
</comment>
<comment type="similarity">
    <text evidence="4">Belongs to the SFH5 family.</text>
</comment>
<feature type="chain" id="PRO_0000324977" description="Phosphatidylinositol transfer protein SFH5">
    <location>
        <begin position="1"/>
        <end position="297"/>
    </location>
</feature>
<feature type="domain" description="CRAL-TRIO" evidence="3">
    <location>
        <begin position="106"/>
        <end position="282"/>
    </location>
</feature>
<feature type="binding site" evidence="1">
    <location>
        <position position="131"/>
    </location>
    <ligand>
        <name>heme</name>
        <dbReference type="ChEBI" id="CHEBI:30413"/>
    </ligand>
</feature>
<feature type="binding site" evidence="1">
    <location>
        <position position="151"/>
    </location>
    <ligand>
        <name>heme</name>
        <dbReference type="ChEBI" id="CHEBI:30413"/>
    </ligand>
</feature>
<feature type="binding site" evidence="1">
    <location>
        <position position="187"/>
    </location>
    <ligand>
        <name>heme</name>
        <dbReference type="ChEBI" id="CHEBI:30413"/>
    </ligand>
</feature>
<feature type="binding site" description="proximal binding residue" evidence="1">
    <location>
        <position position="189"/>
    </location>
    <ligand>
        <name>heme</name>
        <dbReference type="ChEBI" id="CHEBI:30413"/>
    </ligand>
    <ligandPart>
        <name>Fe</name>
        <dbReference type="ChEBI" id="CHEBI:18248"/>
    </ligandPart>
</feature>
<feature type="binding site" evidence="1">
    <location>
        <position position="223"/>
    </location>
    <ligand>
        <name>heme</name>
        <dbReference type="ChEBI" id="CHEBI:30413"/>
    </ligand>
</feature>
<evidence type="ECO:0000250" key="1">
    <source>
        <dbReference type="UniProtKB" id="A6ZQI5"/>
    </source>
</evidence>
<evidence type="ECO:0000250" key="2">
    <source>
        <dbReference type="UniProtKB" id="P47008"/>
    </source>
</evidence>
<evidence type="ECO:0000255" key="3">
    <source>
        <dbReference type="PROSITE-ProRule" id="PRU00056"/>
    </source>
</evidence>
<evidence type="ECO:0000305" key="4"/>
<accession>P0CR44</accession>
<accession>Q55RU9</accession>
<accession>Q5KGA3</accession>
<reference key="1">
    <citation type="journal article" date="2005" name="Science">
        <title>The genome of the basidiomycetous yeast and human pathogen Cryptococcus neoformans.</title>
        <authorList>
            <person name="Loftus B.J."/>
            <person name="Fung E."/>
            <person name="Roncaglia P."/>
            <person name="Rowley D."/>
            <person name="Amedeo P."/>
            <person name="Bruno D."/>
            <person name="Vamathevan J."/>
            <person name="Miranda M."/>
            <person name="Anderson I.J."/>
            <person name="Fraser J.A."/>
            <person name="Allen J.E."/>
            <person name="Bosdet I.E."/>
            <person name="Brent M.R."/>
            <person name="Chiu R."/>
            <person name="Doering T.L."/>
            <person name="Donlin M.J."/>
            <person name="D'Souza C.A."/>
            <person name="Fox D.S."/>
            <person name="Grinberg V."/>
            <person name="Fu J."/>
            <person name="Fukushima M."/>
            <person name="Haas B.J."/>
            <person name="Huang J.C."/>
            <person name="Janbon G."/>
            <person name="Jones S.J.M."/>
            <person name="Koo H.L."/>
            <person name="Krzywinski M.I."/>
            <person name="Kwon-Chung K.J."/>
            <person name="Lengeler K.B."/>
            <person name="Maiti R."/>
            <person name="Marra M.A."/>
            <person name="Marra R.E."/>
            <person name="Mathewson C.A."/>
            <person name="Mitchell T.G."/>
            <person name="Pertea M."/>
            <person name="Riggs F.R."/>
            <person name="Salzberg S.L."/>
            <person name="Schein J.E."/>
            <person name="Shvartsbeyn A."/>
            <person name="Shin H."/>
            <person name="Shumway M."/>
            <person name="Specht C.A."/>
            <person name="Suh B.B."/>
            <person name="Tenney A."/>
            <person name="Utterback T.R."/>
            <person name="Wickes B.L."/>
            <person name="Wortman J.R."/>
            <person name="Wye N.H."/>
            <person name="Kronstad J.W."/>
            <person name="Lodge J.K."/>
            <person name="Heitman J."/>
            <person name="Davis R.W."/>
            <person name="Fraser C.M."/>
            <person name="Hyman R.W."/>
        </authorList>
    </citation>
    <scope>NUCLEOTIDE SEQUENCE [LARGE SCALE GENOMIC DNA]</scope>
    <source>
        <strain>JEC21 / ATCC MYA-565</strain>
    </source>
</reference>
<gene>
    <name type="primary">SFH5</name>
    <name type="ordered locus">CNE04320</name>
</gene>
<name>SFH5_CRYNJ</name>